<evidence type="ECO:0000255" key="1">
    <source>
        <dbReference type="PROSITE-ProRule" id="PRU00981"/>
    </source>
</evidence>
<evidence type="ECO:0000256" key="2">
    <source>
        <dbReference type="SAM" id="MobiDB-lite"/>
    </source>
</evidence>
<evidence type="ECO:0000269" key="3">
    <source>
    </source>
</evidence>
<sequence length="208" mass="23167">MSLVGGFPHHPVMHHDGYSFAAAAAASRCHEEPPYFHGWLISHPEMSPPDYTMAPSYSPEYSTGAPGLDHSHYGGVPGAGAVGMGPRTVKRRPTANRKERRRTQSINSAFAELRECIPNVPADTKLSKIKTLRLATSYIAYLMDILDKDEQNGETEAFKAEFKKTDAKEERRKKEMNDVLKSSGSSNDKKTKGRTGWPQHVWALELKQ</sequence>
<name>HAND2_DANRE</name>
<keyword id="KW-0217">Developmental protein</keyword>
<keyword id="KW-0238">DNA-binding</keyword>
<keyword id="KW-0539">Nucleus</keyword>
<keyword id="KW-1185">Reference proteome</keyword>
<keyword id="KW-0804">Transcription</keyword>
<keyword id="KW-0805">Transcription regulation</keyword>
<reference key="1">
    <citation type="journal article" date="2000" name="Mech. Dev.">
        <title>Conservation of sequence and expression of Xenopus and zebrafish dHAND during cardiac, branchial arch and lateral mesoderm development.</title>
        <authorList>
            <person name="Angelo S."/>
            <person name="Lohr J."/>
            <person name="Lee K.H."/>
            <person name="Ticho B.S."/>
            <person name="Breitbart R.E."/>
            <person name="Hill S."/>
            <person name="Yost H.J."/>
            <person name="Srivastava D."/>
        </authorList>
    </citation>
    <scope>NUCLEOTIDE SEQUENCE [MRNA]</scope>
    <source>
        <tissue>Embryo</tissue>
    </source>
</reference>
<reference key="2">
    <citation type="journal article" date="2000" name="Development">
        <title>The bHLH transcription factor hand2 plays parallel roles in zebrafish heart and pectoral fin development.</title>
        <authorList>
            <person name="Yelon D."/>
            <person name="Ticho B.S."/>
            <person name="Halpern M.E."/>
            <person name="Ruvinsky I."/>
            <person name="Ho R.K."/>
            <person name="Silver L.M."/>
            <person name="Stainier D.Y.R."/>
        </authorList>
    </citation>
    <scope>FUNCTION</scope>
</reference>
<accession>P57102</accession>
<dbReference type="EMBL" id="AF228334">
    <property type="protein sequence ID" value="AAF67130.1"/>
    <property type="molecule type" value="mRNA"/>
</dbReference>
<dbReference type="SMR" id="P57102"/>
<dbReference type="FunCoup" id="P57102">
    <property type="interactions" value="427"/>
</dbReference>
<dbReference type="STRING" id="7955.ENSDARP00000022921"/>
<dbReference type="PaxDb" id="7955-ENSDARP00000022921"/>
<dbReference type="AGR" id="ZFIN:ZDB-GENE-000511-1"/>
<dbReference type="ZFIN" id="ZDB-GENE-000511-1">
    <property type="gene designation" value="hand2"/>
</dbReference>
<dbReference type="eggNOG" id="KOG4029">
    <property type="taxonomic scope" value="Eukaryota"/>
</dbReference>
<dbReference type="InParanoid" id="P57102"/>
<dbReference type="OrthoDB" id="10055449at2759"/>
<dbReference type="PRO" id="PR:P57102"/>
<dbReference type="Proteomes" id="UP000000437">
    <property type="component" value="Unplaced"/>
</dbReference>
<dbReference type="GO" id="GO:0005634">
    <property type="term" value="C:nucleus"/>
    <property type="evidence" value="ECO:0007669"/>
    <property type="project" value="UniProtKB-SubCell"/>
</dbReference>
<dbReference type="GO" id="GO:0000981">
    <property type="term" value="F:DNA-binding transcription factor activity, RNA polymerase II-specific"/>
    <property type="evidence" value="ECO:0000318"/>
    <property type="project" value="GO_Central"/>
</dbReference>
<dbReference type="GO" id="GO:0046983">
    <property type="term" value="F:protein dimerization activity"/>
    <property type="evidence" value="ECO:0007669"/>
    <property type="project" value="InterPro"/>
</dbReference>
<dbReference type="GO" id="GO:0000977">
    <property type="term" value="F:RNA polymerase II transcription regulatory region sequence-specific DNA binding"/>
    <property type="evidence" value="ECO:0000318"/>
    <property type="project" value="GO_Central"/>
</dbReference>
<dbReference type="GO" id="GO:0055007">
    <property type="term" value="P:cardiac muscle cell differentiation"/>
    <property type="evidence" value="ECO:0000315"/>
    <property type="project" value="ZFIN"/>
</dbReference>
<dbReference type="GO" id="GO:0010002">
    <property type="term" value="P:cardioblast differentiation"/>
    <property type="evidence" value="ECO:0000315"/>
    <property type="project" value="ZFIN"/>
</dbReference>
<dbReference type="GO" id="GO:0035051">
    <property type="term" value="P:cardiocyte differentiation"/>
    <property type="evidence" value="ECO:0000315"/>
    <property type="project" value="ZFIN"/>
</dbReference>
<dbReference type="GO" id="GO:0003142">
    <property type="term" value="P:cardiogenic plate morphogenesis"/>
    <property type="evidence" value="ECO:0000315"/>
    <property type="project" value="ZFIN"/>
</dbReference>
<dbReference type="GO" id="GO:0071908">
    <property type="term" value="P:determination of intestine left/right asymmetry"/>
    <property type="evidence" value="ECO:0000315"/>
    <property type="project" value="ZFIN"/>
</dbReference>
<dbReference type="GO" id="GO:0003144">
    <property type="term" value="P:embryonic heart tube formation"/>
    <property type="evidence" value="ECO:0000315"/>
    <property type="project" value="ZFIN"/>
</dbReference>
<dbReference type="GO" id="GO:0035118">
    <property type="term" value="P:embryonic pectoral fin morphogenesis"/>
    <property type="evidence" value="ECO:0000315"/>
    <property type="project" value="ZFIN"/>
</dbReference>
<dbReference type="GO" id="GO:0048703">
    <property type="term" value="P:embryonic viscerocranium morphogenesis"/>
    <property type="evidence" value="ECO:0000315"/>
    <property type="project" value="ZFIN"/>
</dbReference>
<dbReference type="GO" id="GO:0060047">
    <property type="term" value="P:heart contraction"/>
    <property type="evidence" value="ECO:0000315"/>
    <property type="project" value="ZFIN"/>
</dbReference>
<dbReference type="GO" id="GO:0007507">
    <property type="term" value="P:heart development"/>
    <property type="evidence" value="ECO:0000318"/>
    <property type="project" value="GO_Central"/>
</dbReference>
<dbReference type="GO" id="GO:0001947">
    <property type="term" value="P:heart looping"/>
    <property type="evidence" value="ECO:0000316"/>
    <property type="project" value="ZFIN"/>
</dbReference>
<dbReference type="GO" id="GO:0003007">
    <property type="term" value="P:heart morphogenesis"/>
    <property type="evidence" value="ECO:0000315"/>
    <property type="project" value="ZFIN"/>
</dbReference>
<dbReference type="GO" id="GO:0003357">
    <property type="term" value="P:noradrenergic neuron differentiation"/>
    <property type="evidence" value="ECO:0000315"/>
    <property type="project" value="ZFIN"/>
</dbReference>
<dbReference type="GO" id="GO:0072015">
    <property type="term" value="P:podocyte development"/>
    <property type="evidence" value="ECO:0000315"/>
    <property type="project" value="ZFIN"/>
</dbReference>
<dbReference type="GO" id="GO:0030859">
    <property type="term" value="P:polarized epithelial cell differentiation"/>
    <property type="evidence" value="ECO:0000315"/>
    <property type="project" value="ZFIN"/>
</dbReference>
<dbReference type="GO" id="GO:0003342">
    <property type="term" value="P:proepicardium development"/>
    <property type="evidence" value="ECO:0000315"/>
    <property type="project" value="ZFIN"/>
</dbReference>
<dbReference type="GO" id="GO:0006357">
    <property type="term" value="P:regulation of transcription by RNA polymerase II"/>
    <property type="evidence" value="ECO:0000318"/>
    <property type="project" value="GO_Central"/>
</dbReference>
<dbReference type="GO" id="GO:0048485">
    <property type="term" value="P:sympathetic nervous system development"/>
    <property type="evidence" value="ECO:0000315"/>
    <property type="project" value="ZFIN"/>
</dbReference>
<dbReference type="GO" id="GO:0030878">
    <property type="term" value="P:thyroid gland development"/>
    <property type="evidence" value="ECO:0000315"/>
    <property type="project" value="ZFIN"/>
</dbReference>
<dbReference type="CDD" id="cd11471">
    <property type="entry name" value="bHLH_TS_HAND2"/>
    <property type="match status" value="1"/>
</dbReference>
<dbReference type="FunFam" id="4.10.280.10:FF:000010">
    <property type="entry name" value="Scleraxis bHLH transcription factor"/>
    <property type="match status" value="1"/>
</dbReference>
<dbReference type="Gene3D" id="4.10.280.10">
    <property type="entry name" value="Helix-loop-helix DNA-binding domain"/>
    <property type="match status" value="1"/>
</dbReference>
<dbReference type="InterPro" id="IPR011598">
    <property type="entry name" value="bHLH_dom"/>
</dbReference>
<dbReference type="InterPro" id="IPR050283">
    <property type="entry name" value="E-box_TF_Regulators"/>
</dbReference>
<dbReference type="InterPro" id="IPR036638">
    <property type="entry name" value="HLH_DNA-bd_sf"/>
</dbReference>
<dbReference type="PANTHER" id="PTHR23349">
    <property type="entry name" value="BASIC HELIX-LOOP-HELIX TRANSCRIPTION FACTOR, TWIST"/>
    <property type="match status" value="1"/>
</dbReference>
<dbReference type="PANTHER" id="PTHR23349:SF41">
    <property type="entry name" value="HEART- AND NEURAL CREST DERIVATIVES-EXPRESSED PROTEIN 2"/>
    <property type="match status" value="1"/>
</dbReference>
<dbReference type="Pfam" id="PF00010">
    <property type="entry name" value="HLH"/>
    <property type="match status" value="1"/>
</dbReference>
<dbReference type="SMART" id="SM00353">
    <property type="entry name" value="HLH"/>
    <property type="match status" value="1"/>
</dbReference>
<dbReference type="SUPFAM" id="SSF47459">
    <property type="entry name" value="HLH, helix-loop-helix DNA-binding domain"/>
    <property type="match status" value="1"/>
</dbReference>
<dbReference type="PROSITE" id="PS50888">
    <property type="entry name" value="BHLH"/>
    <property type="match status" value="1"/>
</dbReference>
<organism>
    <name type="scientific">Danio rerio</name>
    <name type="common">Zebrafish</name>
    <name type="synonym">Brachydanio rerio</name>
    <dbReference type="NCBI Taxonomy" id="7955"/>
    <lineage>
        <taxon>Eukaryota</taxon>
        <taxon>Metazoa</taxon>
        <taxon>Chordata</taxon>
        <taxon>Craniata</taxon>
        <taxon>Vertebrata</taxon>
        <taxon>Euteleostomi</taxon>
        <taxon>Actinopterygii</taxon>
        <taxon>Neopterygii</taxon>
        <taxon>Teleostei</taxon>
        <taxon>Ostariophysi</taxon>
        <taxon>Cypriniformes</taxon>
        <taxon>Danionidae</taxon>
        <taxon>Danioninae</taxon>
        <taxon>Danio</taxon>
    </lineage>
</organism>
<comment type="function">
    <text evidence="3">Essential for myocardial and pectoral fin differentiation, patterning and morphogenesis.</text>
</comment>
<comment type="subunit">
    <text>Efficient DNA binding requires dimerization with another bHLH protein.</text>
</comment>
<comment type="subcellular location">
    <subcellularLocation>
        <location evidence="1">Nucleus</location>
    </subcellularLocation>
</comment>
<comment type="developmental stage">
    <text>Expression first detected at 8 hours post fertilization (hpf) in a circumferential pattern in the lateral mesoderm. At 12 hpf, still expressed in the anterior and posterior lateral plate mesoderm which is partly detached from the yolk at this stage. By 18-20 hpf, expressed in the cardiac ring and in a layer of lateral mesoderm surrounding the cardiac region, as well as in the posterior lateral mesoderm. At 24 hpf, expressed throughout the nascent cardiac tube and in bilaterally symmetric clusters of ventrolateral cells that condense to form branchial arch mesoderm which gives rise to jaw and pharyngeal bones. Expression continues bilaterally in the posterior lateral mesoderm. At 36-48 hpf, expressed in defined branchial arch mesoderm populations. At 48 hpf, strong expression throughout the heart tube.</text>
</comment>
<gene>
    <name type="primary">hand2</name>
    <name type="synonym">dhand</name>
</gene>
<protein>
    <recommendedName>
        <fullName>Heart- and neural crest derivatives-expressed protein 2</fullName>
    </recommendedName>
    <alternativeName>
        <fullName>Deciduum, heart, autonomic nervous system and neural crest derivatives-expressed protein 2</fullName>
        <shortName>dHAND</shortName>
    </alternativeName>
</protein>
<proteinExistence type="evidence at transcript level"/>
<feature type="chain" id="PRO_0000127194" description="Heart- and neural crest derivatives-expressed protein 2">
    <location>
        <begin position="1"/>
        <end position="208"/>
    </location>
</feature>
<feature type="domain" description="bHLH" evidence="1">
    <location>
        <begin position="90"/>
        <end position="142"/>
    </location>
</feature>
<feature type="region of interest" description="Disordered" evidence="2">
    <location>
        <begin position="79"/>
        <end position="106"/>
    </location>
</feature>
<feature type="region of interest" description="Disordered" evidence="2">
    <location>
        <begin position="161"/>
        <end position="197"/>
    </location>
</feature>
<feature type="compositionally biased region" description="Basic residues" evidence="2">
    <location>
        <begin position="88"/>
        <end position="103"/>
    </location>
</feature>
<feature type="compositionally biased region" description="Basic and acidic residues" evidence="2">
    <location>
        <begin position="161"/>
        <end position="178"/>
    </location>
</feature>